<protein>
    <recommendedName>
        <fullName evidence="1">Ribonuclease M5</fullName>
        <ecNumber evidence="1">3.1.26.8</ecNumber>
    </recommendedName>
    <alternativeName>
        <fullName evidence="1">RNase M5</fullName>
    </alternativeName>
    <alternativeName>
        <fullName evidence="1">Ribosomal RNA terminal maturase M5</fullName>
    </alternativeName>
</protein>
<gene>
    <name evidence="1" type="primary">rnmV</name>
    <name type="ordered locus">MPN_072</name>
    <name type="ORF">D09_orf178</name>
    <name type="ORF">MP083</name>
</gene>
<sequence>MDKKTRLKLDGVIVCEGKTDQARLQQLFDVSVITTNGSALNQRTINLIKAVAKKQPVILFLDPDVAGQKIRRQLEQHLDKYESCFIARKDMKPNSTKIGVAEATDAALIQALQQRQVFTKTTQPTLSWEQYLELNLNSKSKRLALCNKLHLSYFNHKQLFRKLNLLQLTFDQVCQLLK</sequence>
<feature type="chain" id="PRO_0000210402" description="Ribonuclease M5">
    <location>
        <begin position="1"/>
        <end position="178"/>
    </location>
</feature>
<feature type="domain" description="Toprim" evidence="1">
    <location>
        <begin position="10"/>
        <end position="103"/>
    </location>
</feature>
<feature type="binding site" evidence="1">
    <location>
        <position position="16"/>
    </location>
    <ligand>
        <name>Mg(2+)</name>
        <dbReference type="ChEBI" id="CHEBI:18420"/>
        <label>1</label>
        <note>catalytic</note>
    </ligand>
</feature>
<feature type="binding site" evidence="1">
    <location>
        <position position="62"/>
    </location>
    <ligand>
        <name>Mg(2+)</name>
        <dbReference type="ChEBI" id="CHEBI:18420"/>
        <label>1</label>
        <note>catalytic</note>
    </ligand>
</feature>
<feature type="binding site" evidence="1">
    <location>
        <position position="62"/>
    </location>
    <ligand>
        <name>Mg(2+)</name>
        <dbReference type="ChEBI" id="CHEBI:18420"/>
        <label>2</label>
    </ligand>
</feature>
<feature type="binding site" evidence="1">
    <location>
        <position position="64"/>
    </location>
    <ligand>
        <name>Mg(2+)</name>
        <dbReference type="ChEBI" id="CHEBI:18420"/>
        <label>2</label>
    </ligand>
</feature>
<evidence type="ECO:0000255" key="1">
    <source>
        <dbReference type="HAMAP-Rule" id="MF_01469"/>
    </source>
</evidence>
<name>RNM5_MYCPN</name>
<accession>P75045</accession>
<comment type="function">
    <text evidence="1">Required for correct processing of both the 5' and 3' ends of 5S rRNA precursor. Cleaves both sides of a double-stranded region yielding mature 5S rRNA in one step.</text>
</comment>
<comment type="catalytic activity">
    <reaction evidence="1">
        <text>Endonucleolytic cleavage of RNA, removing 21 and 42 nucleotides, respectively, from the 5'- and 3'-termini of a 5S-rRNA precursor.</text>
        <dbReference type="EC" id="3.1.26.8"/>
    </reaction>
</comment>
<comment type="cofactor">
    <cofactor evidence="1">
        <name>Mg(2+)</name>
        <dbReference type="ChEBI" id="CHEBI:18420"/>
    </cofactor>
    <text evidence="1">Binds two Mg(2+) per subunit.</text>
</comment>
<comment type="subcellular location">
    <subcellularLocation>
        <location evidence="1">Cytoplasm</location>
    </subcellularLocation>
</comment>
<comment type="similarity">
    <text evidence="1">Belongs to the ribonuclease M5 family.</text>
</comment>
<organism>
    <name type="scientific">Mycoplasma pneumoniae (strain ATCC 29342 / M129 / Subtype 1)</name>
    <name type="common">Mycoplasmoides pneumoniae</name>
    <dbReference type="NCBI Taxonomy" id="272634"/>
    <lineage>
        <taxon>Bacteria</taxon>
        <taxon>Bacillati</taxon>
        <taxon>Mycoplasmatota</taxon>
        <taxon>Mycoplasmoidales</taxon>
        <taxon>Mycoplasmoidaceae</taxon>
        <taxon>Mycoplasmoides</taxon>
    </lineage>
</organism>
<keyword id="KW-0963">Cytoplasm</keyword>
<keyword id="KW-0255">Endonuclease</keyword>
<keyword id="KW-0378">Hydrolase</keyword>
<keyword id="KW-0460">Magnesium</keyword>
<keyword id="KW-0479">Metal-binding</keyword>
<keyword id="KW-0540">Nuclease</keyword>
<keyword id="KW-1185">Reference proteome</keyword>
<keyword id="KW-0690">Ribosome biogenesis</keyword>
<keyword id="KW-0694">RNA-binding</keyword>
<keyword id="KW-0698">rRNA processing</keyword>
<keyword id="KW-0699">rRNA-binding</keyword>
<proteinExistence type="inferred from homology"/>
<reference key="1">
    <citation type="journal article" date="1996" name="Nucleic Acids Res.">
        <title>Complete sequence analysis of the genome of the bacterium Mycoplasma pneumoniae.</title>
        <authorList>
            <person name="Himmelreich R."/>
            <person name="Hilbert H."/>
            <person name="Plagens H."/>
            <person name="Pirkl E."/>
            <person name="Li B.-C."/>
            <person name="Herrmann R."/>
        </authorList>
    </citation>
    <scope>NUCLEOTIDE SEQUENCE [LARGE SCALE GENOMIC DNA]</scope>
    <source>
        <strain>ATCC 29342 / M129 / Subtype 1</strain>
    </source>
</reference>
<dbReference type="EC" id="3.1.26.8" evidence="1"/>
<dbReference type="EMBL" id="U00089">
    <property type="protein sequence ID" value="AAB95731.1"/>
    <property type="molecule type" value="Genomic_DNA"/>
</dbReference>
<dbReference type="PIR" id="S73409">
    <property type="entry name" value="S73409"/>
</dbReference>
<dbReference type="RefSeq" id="NP_109760.1">
    <property type="nucleotide sequence ID" value="NC_000912.1"/>
</dbReference>
<dbReference type="RefSeq" id="WP_010874429.1">
    <property type="nucleotide sequence ID" value="NZ_OU342337.1"/>
</dbReference>
<dbReference type="SMR" id="P75045"/>
<dbReference type="IntAct" id="P75045">
    <property type="interactions" value="3"/>
</dbReference>
<dbReference type="STRING" id="272634.MPN_072"/>
<dbReference type="EnsemblBacteria" id="AAB95731">
    <property type="protein sequence ID" value="AAB95731"/>
    <property type="gene ID" value="MPN_072"/>
</dbReference>
<dbReference type="GeneID" id="66609286"/>
<dbReference type="KEGG" id="mpn:MPN_072"/>
<dbReference type="PATRIC" id="fig|272634.6.peg.73"/>
<dbReference type="HOGENOM" id="CLU_109405_1_0_14"/>
<dbReference type="OrthoDB" id="9791329at2"/>
<dbReference type="BioCyc" id="MPNE272634:G1GJ3-110-MONOMER"/>
<dbReference type="Proteomes" id="UP000000808">
    <property type="component" value="Chromosome"/>
</dbReference>
<dbReference type="GO" id="GO:0005737">
    <property type="term" value="C:cytoplasm"/>
    <property type="evidence" value="ECO:0007669"/>
    <property type="project" value="UniProtKB-SubCell"/>
</dbReference>
<dbReference type="GO" id="GO:0046872">
    <property type="term" value="F:metal ion binding"/>
    <property type="evidence" value="ECO:0007669"/>
    <property type="project" value="UniProtKB-KW"/>
</dbReference>
<dbReference type="GO" id="GO:0043822">
    <property type="term" value="F:ribonuclease M5 activity"/>
    <property type="evidence" value="ECO:0007669"/>
    <property type="project" value="UniProtKB-UniRule"/>
</dbReference>
<dbReference type="GO" id="GO:0019843">
    <property type="term" value="F:rRNA binding"/>
    <property type="evidence" value="ECO:0007669"/>
    <property type="project" value="UniProtKB-KW"/>
</dbReference>
<dbReference type="GO" id="GO:0006364">
    <property type="term" value="P:rRNA processing"/>
    <property type="evidence" value="ECO:0007669"/>
    <property type="project" value="UniProtKB-UniRule"/>
</dbReference>
<dbReference type="CDD" id="cd01027">
    <property type="entry name" value="TOPRIM_RNase_M5_like"/>
    <property type="match status" value="1"/>
</dbReference>
<dbReference type="Gene3D" id="3.40.1360.10">
    <property type="match status" value="1"/>
</dbReference>
<dbReference type="HAMAP" id="MF_01469">
    <property type="entry name" value="RNase_M5"/>
    <property type="match status" value="1"/>
</dbReference>
<dbReference type="InterPro" id="IPR004466">
    <property type="entry name" value="RNase_M5"/>
</dbReference>
<dbReference type="InterPro" id="IPR025156">
    <property type="entry name" value="RNase_M5_C"/>
</dbReference>
<dbReference type="InterPro" id="IPR006171">
    <property type="entry name" value="TOPRIM_dom"/>
</dbReference>
<dbReference type="InterPro" id="IPR034141">
    <property type="entry name" value="TOPRIM_RNase_M5-like"/>
</dbReference>
<dbReference type="NCBIfam" id="TIGR00334">
    <property type="entry name" value="5S_RNA_mat_M5"/>
    <property type="match status" value="1"/>
</dbReference>
<dbReference type="PANTHER" id="PTHR39156">
    <property type="entry name" value="RIBONUCLEASE M5"/>
    <property type="match status" value="1"/>
</dbReference>
<dbReference type="PANTHER" id="PTHR39156:SF1">
    <property type="entry name" value="RIBONUCLEASE M5"/>
    <property type="match status" value="1"/>
</dbReference>
<dbReference type="Pfam" id="PF13331">
    <property type="entry name" value="DUF4093"/>
    <property type="match status" value="1"/>
</dbReference>
<dbReference type="Pfam" id="PF01751">
    <property type="entry name" value="Toprim"/>
    <property type="match status" value="1"/>
</dbReference>
<dbReference type="SMART" id="SM00493">
    <property type="entry name" value="TOPRIM"/>
    <property type="match status" value="1"/>
</dbReference>
<dbReference type="SUPFAM" id="SSF110455">
    <property type="entry name" value="Toprim domain"/>
    <property type="match status" value="1"/>
</dbReference>
<dbReference type="PROSITE" id="PS50880">
    <property type="entry name" value="TOPRIM"/>
    <property type="match status" value="1"/>
</dbReference>